<feature type="chain" id="PRO_0000102954" description="SsrA-binding protein">
    <location>
        <begin position="1"/>
        <end position="152"/>
    </location>
</feature>
<sequence length="152" mass="17550">MAGEKTRKILVDNRKARFEYEILETYSAGLALLGTEVKAIRAGRANLNDAFARIHHGEVLLYNMNISPLQTAGAFAHDPLRTRKLLLKRREIHKLTGRVEEKGLTLIPLKLYLEGSWVKLDLGLARGKKLYDKREDIKKRETKRDIERAMRR</sequence>
<name>SSRP_GLOVI</name>
<organism>
    <name type="scientific">Gloeobacter violaceus (strain ATCC 29082 / PCC 7421)</name>
    <dbReference type="NCBI Taxonomy" id="251221"/>
    <lineage>
        <taxon>Bacteria</taxon>
        <taxon>Bacillati</taxon>
        <taxon>Cyanobacteriota</taxon>
        <taxon>Cyanophyceae</taxon>
        <taxon>Gloeobacterales</taxon>
        <taxon>Gloeobacteraceae</taxon>
        <taxon>Gloeobacter</taxon>
    </lineage>
</organism>
<evidence type="ECO:0000255" key="1">
    <source>
        <dbReference type="HAMAP-Rule" id="MF_00023"/>
    </source>
</evidence>
<comment type="function">
    <text evidence="1">Required for rescue of stalled ribosomes mediated by trans-translation. Binds to transfer-messenger RNA (tmRNA), required for stable association of tmRNA with ribosomes. tmRNA and SmpB together mimic tRNA shape, replacing the anticodon stem-loop with SmpB. tmRNA is encoded by the ssrA gene; the 2 termini fold to resemble tRNA(Ala) and it encodes a 'tag peptide', a short internal open reading frame. During trans-translation Ala-aminoacylated tmRNA acts like a tRNA, entering the A-site of stalled ribosomes, displacing the stalled mRNA. The ribosome then switches to translate the ORF on the tmRNA; the nascent peptide is terminated with the 'tag peptide' encoded by the tmRNA and targeted for degradation. The ribosome is freed to recommence translation, which seems to be the essential function of trans-translation.</text>
</comment>
<comment type="subcellular location">
    <subcellularLocation>
        <location evidence="1">Cytoplasm</location>
    </subcellularLocation>
    <text evidence="1">The tmRNA-SmpB complex associates with stalled 70S ribosomes.</text>
</comment>
<comment type="similarity">
    <text evidence="1">Belongs to the SmpB family.</text>
</comment>
<reference key="1">
    <citation type="journal article" date="2003" name="DNA Res.">
        <title>Complete genome structure of Gloeobacter violaceus PCC 7421, a cyanobacterium that lacks thylakoids.</title>
        <authorList>
            <person name="Nakamura Y."/>
            <person name="Kaneko T."/>
            <person name="Sato S."/>
            <person name="Mimuro M."/>
            <person name="Miyashita H."/>
            <person name="Tsuchiya T."/>
            <person name="Sasamoto S."/>
            <person name="Watanabe A."/>
            <person name="Kawashima K."/>
            <person name="Kishida Y."/>
            <person name="Kiyokawa C."/>
            <person name="Kohara M."/>
            <person name="Matsumoto M."/>
            <person name="Matsuno A."/>
            <person name="Nakazaki N."/>
            <person name="Shimpo S."/>
            <person name="Takeuchi C."/>
            <person name="Yamada M."/>
            <person name="Tabata S."/>
        </authorList>
    </citation>
    <scope>NUCLEOTIDE SEQUENCE [LARGE SCALE GENOMIC DNA]</scope>
    <source>
        <strain>ATCC 29082 / PCC 7421</strain>
    </source>
</reference>
<dbReference type="EMBL" id="BA000045">
    <property type="protein sequence ID" value="BAC89435.1"/>
    <property type="molecule type" value="Genomic_DNA"/>
</dbReference>
<dbReference type="RefSeq" id="NP_924440.1">
    <property type="nucleotide sequence ID" value="NC_005125.1"/>
</dbReference>
<dbReference type="RefSeq" id="WP_011141494.1">
    <property type="nucleotide sequence ID" value="NC_005125.1"/>
</dbReference>
<dbReference type="SMR" id="Q7NKI3"/>
<dbReference type="FunCoup" id="Q7NKI3">
    <property type="interactions" value="64"/>
</dbReference>
<dbReference type="STRING" id="251221.gene:10758983"/>
<dbReference type="EnsemblBacteria" id="BAC89435">
    <property type="protein sequence ID" value="BAC89435"/>
    <property type="gene ID" value="BAC89435"/>
</dbReference>
<dbReference type="KEGG" id="gvi:gll1494"/>
<dbReference type="PATRIC" id="fig|251221.4.peg.1528"/>
<dbReference type="eggNOG" id="COG0691">
    <property type="taxonomic scope" value="Bacteria"/>
</dbReference>
<dbReference type="HOGENOM" id="CLU_108953_0_1_3"/>
<dbReference type="InParanoid" id="Q7NKI3"/>
<dbReference type="OrthoDB" id="9805462at2"/>
<dbReference type="PhylomeDB" id="Q7NKI3"/>
<dbReference type="Proteomes" id="UP000000557">
    <property type="component" value="Chromosome"/>
</dbReference>
<dbReference type="GO" id="GO:0005829">
    <property type="term" value="C:cytosol"/>
    <property type="evidence" value="ECO:0000318"/>
    <property type="project" value="GO_Central"/>
</dbReference>
<dbReference type="GO" id="GO:0003723">
    <property type="term" value="F:RNA binding"/>
    <property type="evidence" value="ECO:0000318"/>
    <property type="project" value="GO_Central"/>
</dbReference>
<dbReference type="GO" id="GO:0070929">
    <property type="term" value="P:trans-translation"/>
    <property type="evidence" value="ECO:0007669"/>
    <property type="project" value="UniProtKB-UniRule"/>
</dbReference>
<dbReference type="CDD" id="cd09294">
    <property type="entry name" value="SmpB"/>
    <property type="match status" value="1"/>
</dbReference>
<dbReference type="Gene3D" id="2.40.280.10">
    <property type="match status" value="1"/>
</dbReference>
<dbReference type="HAMAP" id="MF_00023">
    <property type="entry name" value="SmpB"/>
    <property type="match status" value="1"/>
</dbReference>
<dbReference type="InterPro" id="IPR023620">
    <property type="entry name" value="SmpB"/>
</dbReference>
<dbReference type="InterPro" id="IPR000037">
    <property type="entry name" value="SsrA-bd_prot"/>
</dbReference>
<dbReference type="InterPro" id="IPR020081">
    <property type="entry name" value="SsrA-bd_prot_CS"/>
</dbReference>
<dbReference type="NCBIfam" id="NF003843">
    <property type="entry name" value="PRK05422.1"/>
    <property type="match status" value="1"/>
</dbReference>
<dbReference type="NCBIfam" id="TIGR00086">
    <property type="entry name" value="smpB"/>
    <property type="match status" value="1"/>
</dbReference>
<dbReference type="PANTHER" id="PTHR30308:SF2">
    <property type="entry name" value="SSRA-BINDING PROTEIN"/>
    <property type="match status" value="1"/>
</dbReference>
<dbReference type="PANTHER" id="PTHR30308">
    <property type="entry name" value="TMRNA-BINDING COMPONENT OF TRANS-TRANSLATION TAGGING COMPLEX"/>
    <property type="match status" value="1"/>
</dbReference>
<dbReference type="Pfam" id="PF01668">
    <property type="entry name" value="SmpB"/>
    <property type="match status" value="1"/>
</dbReference>
<dbReference type="SUPFAM" id="SSF74982">
    <property type="entry name" value="Small protein B (SmpB)"/>
    <property type="match status" value="1"/>
</dbReference>
<dbReference type="PROSITE" id="PS01317">
    <property type="entry name" value="SSRP"/>
    <property type="match status" value="1"/>
</dbReference>
<accession>Q7NKI3</accession>
<keyword id="KW-0963">Cytoplasm</keyword>
<keyword id="KW-1185">Reference proteome</keyword>
<keyword id="KW-0694">RNA-binding</keyword>
<proteinExistence type="inferred from homology"/>
<gene>
    <name evidence="1" type="primary">smpB</name>
    <name type="ordered locus">gll1494</name>
</gene>
<protein>
    <recommendedName>
        <fullName evidence="1">SsrA-binding protein</fullName>
    </recommendedName>
    <alternativeName>
        <fullName evidence="1">Small protein B</fullName>
    </alternativeName>
</protein>